<gene>
    <name type="primary">mcb</name>
    <name type="ORF">123A4.120</name>
    <name type="ORF">NCU01166</name>
</gene>
<feature type="chain" id="PRO_0000205412" description="cAMP-dependent protein kinase regulatory subunit">
    <location>
        <begin position="1"/>
        <end position="385"/>
    </location>
</feature>
<feature type="region of interest" description="Dimerization and phosphorylation" evidence="2">
    <location>
        <begin position="1"/>
        <end position="128"/>
    </location>
</feature>
<feature type="region of interest" description="Disordered" evidence="3">
    <location>
        <begin position="1"/>
        <end position="51"/>
    </location>
</feature>
<feature type="region of interest" description="Disordered" evidence="3">
    <location>
        <begin position="77"/>
        <end position="111"/>
    </location>
</feature>
<feature type="compositionally biased region" description="Polar residues" evidence="3">
    <location>
        <begin position="1"/>
        <end position="22"/>
    </location>
</feature>
<feature type="binding site">
    <location>
        <begin position="129"/>
        <end position="260"/>
    </location>
    <ligand>
        <name>3',5'-cyclic AMP</name>
        <dbReference type="ChEBI" id="CHEBI:58165"/>
        <label>1</label>
    </ligand>
</feature>
<feature type="binding site" evidence="1">
    <location>
        <position position="207"/>
    </location>
    <ligand>
        <name>3',5'-cyclic AMP</name>
        <dbReference type="ChEBI" id="CHEBI:58165"/>
        <label>1</label>
    </ligand>
</feature>
<feature type="binding site" evidence="1">
    <location>
        <position position="216"/>
    </location>
    <ligand>
        <name>3',5'-cyclic AMP</name>
        <dbReference type="ChEBI" id="CHEBI:58165"/>
        <label>1</label>
    </ligand>
</feature>
<feature type="binding site">
    <location>
        <begin position="261"/>
        <end position="378"/>
    </location>
    <ligand>
        <name>3',5'-cyclic AMP</name>
        <dbReference type="ChEBI" id="CHEBI:58165"/>
        <label>2</label>
    </ligand>
</feature>
<feature type="binding site" evidence="1">
    <location>
        <position position="328"/>
    </location>
    <ligand>
        <name>3',5'-cyclic AMP</name>
        <dbReference type="ChEBI" id="CHEBI:58165"/>
        <label>2</label>
    </ligand>
</feature>
<feature type="binding site" evidence="1">
    <location>
        <position position="337"/>
    </location>
    <ligand>
        <name>3',5'-cyclic AMP</name>
        <dbReference type="ChEBI" id="CHEBI:58165"/>
        <label>2</label>
    </ligand>
</feature>
<feature type="modified residue" description="Phosphoserine" evidence="1">
    <location>
        <position position="89"/>
    </location>
</feature>
<keyword id="KW-0114">cAMP</keyword>
<keyword id="KW-0116">cAMP-binding</keyword>
<keyword id="KW-0547">Nucleotide-binding</keyword>
<keyword id="KW-0597">Phosphoprotein</keyword>
<keyword id="KW-1185">Reference proteome</keyword>
<keyword id="KW-0677">Repeat</keyword>
<evidence type="ECO:0000250" key="1"/>
<evidence type="ECO:0000255" key="2"/>
<evidence type="ECO:0000256" key="3">
    <source>
        <dbReference type="SAM" id="MobiDB-lite"/>
    </source>
</evidence>
<evidence type="ECO:0000305" key="4"/>
<comment type="subunit">
    <text evidence="1">Tetramer, composed of 2 regulatory (R) and 2 catalytic (C) subunits. In the presence of cAMP it dissociates into 2 active monomeric C subunits and an R dimer (By similarity).</text>
</comment>
<comment type="similarity">
    <text evidence="4">Belongs to the cAMP-dependent kinase regulatory chain family.</text>
</comment>
<protein>
    <recommendedName>
        <fullName>cAMP-dependent protein kinase regulatory subunit</fullName>
        <shortName>PKA regulatory subunit</shortName>
    </recommendedName>
    <alternativeName>
        <fullName>Microcycle blastoconidiation protein</fullName>
    </alternativeName>
</protein>
<dbReference type="EMBL" id="L78009">
    <property type="protein sequence ID" value="AAB00121.1"/>
    <property type="molecule type" value="Genomic_DNA"/>
</dbReference>
<dbReference type="EMBL" id="AL670009">
    <property type="protein sequence ID" value="CAD21365.1"/>
    <property type="molecule type" value="Genomic_DNA"/>
</dbReference>
<dbReference type="EMBL" id="CM002240">
    <property type="protein sequence ID" value="ESA42511.1"/>
    <property type="molecule type" value="Genomic_DNA"/>
</dbReference>
<dbReference type="EMBL" id="CM002240">
    <property type="protein sequence ID" value="ESA42512.1"/>
    <property type="molecule type" value="Genomic_DNA"/>
</dbReference>
<dbReference type="RefSeq" id="XP_011394477.1">
    <property type="nucleotide sequence ID" value="XM_011396175.1"/>
</dbReference>
<dbReference type="RefSeq" id="XP_011394478.1">
    <property type="nucleotide sequence ID" value="XM_011396176.1"/>
</dbReference>
<dbReference type="SMR" id="Q01386"/>
<dbReference type="FunCoup" id="Q01386">
    <property type="interactions" value="406"/>
</dbReference>
<dbReference type="STRING" id="367110.Q01386"/>
<dbReference type="PaxDb" id="5141-EFNCRP00000004245"/>
<dbReference type="EnsemblFungi" id="ESA42511">
    <property type="protein sequence ID" value="ESA42511"/>
    <property type="gene ID" value="NCU01166"/>
</dbReference>
<dbReference type="EnsemblFungi" id="ESA42512">
    <property type="protein sequence ID" value="ESA42512"/>
    <property type="gene ID" value="NCU01166"/>
</dbReference>
<dbReference type="GeneID" id="3877728"/>
<dbReference type="KEGG" id="ncr:NCU01166"/>
<dbReference type="VEuPathDB" id="FungiDB:NCU01166"/>
<dbReference type="HOGENOM" id="CLU_018310_0_0_1"/>
<dbReference type="InParanoid" id="Q01386"/>
<dbReference type="OMA" id="WSPPHHP"/>
<dbReference type="OrthoDB" id="417078at2759"/>
<dbReference type="Proteomes" id="UP000001805">
    <property type="component" value="Chromosome 2, Linkage Group V"/>
</dbReference>
<dbReference type="GO" id="GO:0005952">
    <property type="term" value="C:cAMP-dependent protein kinase complex"/>
    <property type="evidence" value="ECO:0000318"/>
    <property type="project" value="GO_Central"/>
</dbReference>
<dbReference type="GO" id="GO:0005829">
    <property type="term" value="C:cytosol"/>
    <property type="evidence" value="ECO:0000318"/>
    <property type="project" value="GO_Central"/>
</dbReference>
<dbReference type="GO" id="GO:0005634">
    <property type="term" value="C:nucleus"/>
    <property type="evidence" value="ECO:0000318"/>
    <property type="project" value="GO_Central"/>
</dbReference>
<dbReference type="GO" id="GO:0030552">
    <property type="term" value="F:cAMP binding"/>
    <property type="evidence" value="ECO:0000318"/>
    <property type="project" value="GO_Central"/>
</dbReference>
<dbReference type="GO" id="GO:0004862">
    <property type="term" value="F:cAMP-dependent protein kinase inhibitor activity"/>
    <property type="evidence" value="ECO:0000318"/>
    <property type="project" value="GO_Central"/>
</dbReference>
<dbReference type="GO" id="GO:0034236">
    <property type="term" value="F:protein kinase A catalytic subunit binding"/>
    <property type="evidence" value="ECO:0000318"/>
    <property type="project" value="GO_Central"/>
</dbReference>
<dbReference type="GO" id="GO:0007189">
    <property type="term" value="P:adenylate cyclase-activating G protein-coupled receptor signaling pathway"/>
    <property type="evidence" value="ECO:0000318"/>
    <property type="project" value="GO_Central"/>
</dbReference>
<dbReference type="CDD" id="cd00038">
    <property type="entry name" value="CAP_ED"/>
    <property type="match status" value="2"/>
</dbReference>
<dbReference type="FunFam" id="2.60.120.10:FF:000039">
    <property type="entry name" value="cAMP-dependent protein kinase regulatory subunit"/>
    <property type="match status" value="1"/>
</dbReference>
<dbReference type="FunFam" id="2.60.120.10:FF:000006">
    <property type="entry name" value="cAMP-dependent protein kinase type I-alpha regulatory subunit"/>
    <property type="match status" value="1"/>
</dbReference>
<dbReference type="Gene3D" id="2.60.120.10">
    <property type="entry name" value="Jelly Rolls"/>
    <property type="match status" value="2"/>
</dbReference>
<dbReference type="InterPro" id="IPR050503">
    <property type="entry name" value="cAMP-dep_PK_reg_su-like"/>
</dbReference>
<dbReference type="InterPro" id="IPR012198">
    <property type="entry name" value="cAMP_dep_PK_reg_su"/>
</dbReference>
<dbReference type="InterPro" id="IPR018488">
    <property type="entry name" value="cNMP-bd_CS"/>
</dbReference>
<dbReference type="InterPro" id="IPR000595">
    <property type="entry name" value="cNMP-bd_dom"/>
</dbReference>
<dbReference type="InterPro" id="IPR018490">
    <property type="entry name" value="cNMP-bd_dom_sf"/>
</dbReference>
<dbReference type="InterPro" id="IPR014710">
    <property type="entry name" value="RmlC-like_jellyroll"/>
</dbReference>
<dbReference type="PANTHER" id="PTHR11635">
    <property type="entry name" value="CAMP-DEPENDENT PROTEIN KINASE REGULATORY CHAIN"/>
    <property type="match status" value="1"/>
</dbReference>
<dbReference type="PANTHER" id="PTHR11635:SF152">
    <property type="entry name" value="CAMP-DEPENDENT PROTEIN KINASE TYPE I REGULATORY SUBUNIT-RELATED"/>
    <property type="match status" value="1"/>
</dbReference>
<dbReference type="Pfam" id="PF00027">
    <property type="entry name" value="cNMP_binding"/>
    <property type="match status" value="2"/>
</dbReference>
<dbReference type="PIRSF" id="PIRSF000548">
    <property type="entry name" value="PK_regulatory"/>
    <property type="match status" value="1"/>
</dbReference>
<dbReference type="PRINTS" id="PR00103">
    <property type="entry name" value="CAMPKINASE"/>
</dbReference>
<dbReference type="SMART" id="SM00100">
    <property type="entry name" value="cNMP"/>
    <property type="match status" value="2"/>
</dbReference>
<dbReference type="SUPFAM" id="SSF51206">
    <property type="entry name" value="cAMP-binding domain-like"/>
    <property type="match status" value="2"/>
</dbReference>
<dbReference type="PROSITE" id="PS00888">
    <property type="entry name" value="CNMP_BINDING_1"/>
    <property type="match status" value="2"/>
</dbReference>
<dbReference type="PROSITE" id="PS00889">
    <property type="entry name" value="CNMP_BINDING_2"/>
    <property type="match status" value="2"/>
</dbReference>
<dbReference type="PROSITE" id="PS50042">
    <property type="entry name" value="CNMP_BINDING_3"/>
    <property type="match status" value="2"/>
</dbReference>
<accession>Q01386</accession>
<accession>Q7RVE4</accession>
<accession>V5ILJ8</accession>
<sequence length="385" mass="42156">MSSTGFTSPFGNANPFGSSGRSESGPMHRLVEEDENDTITSPTTPHFGVKNNAAPAFWNGFGGDAPSDMPVRRQPDDFPAHYNLGRRTSVSAESLKPVTDNSDNWSPPVHPKTAEQLERLKKAISGNFLFNHLEDDQSAQVLGALVEKPVPAKGIKVITQGDAGDYFYVVEKGRFEVYVNSTGALQPGPDGMGQKVGEIAEGGSFGELALMYNAPRAATVVSAEPQCTLWALDRVTFRRILMESTFSRRRMYESFLEEVPILKTLTPYERSKIADALESQKYPAGHEIILEGDPGHSFFLLEAGEAAAFKRGNDSPVKNYKKGDFFGELALLNDAPRAASVISQTEVKVARLGKNAFQRLLGPIESILRRTRYVEAEEVDPLQVS</sequence>
<organism>
    <name type="scientific">Neurospora crassa (strain ATCC 24698 / 74-OR23-1A / CBS 708.71 / DSM 1257 / FGSC 987)</name>
    <dbReference type="NCBI Taxonomy" id="367110"/>
    <lineage>
        <taxon>Eukaryota</taxon>
        <taxon>Fungi</taxon>
        <taxon>Dikarya</taxon>
        <taxon>Ascomycota</taxon>
        <taxon>Pezizomycotina</taxon>
        <taxon>Sordariomycetes</taxon>
        <taxon>Sordariomycetidae</taxon>
        <taxon>Sordariales</taxon>
        <taxon>Sordariaceae</taxon>
        <taxon>Neurospora</taxon>
    </lineage>
</organism>
<reference key="1">
    <citation type="journal article" date="1996" name="EMBO J.">
        <title>Loss of growth polarity and mislocalization of septa in a Neurospora mutant altered in the regulatory subunit of cAMP-dependent protein kinase.</title>
        <authorList>
            <person name="Bruno K.S."/>
            <person name="Aramayo R."/>
            <person name="Minke P.F."/>
            <person name="Metzenberg R.L."/>
            <person name="Plamann M."/>
        </authorList>
    </citation>
    <scope>NUCLEOTIDE SEQUENCE [GENOMIC DNA]</scope>
</reference>
<reference key="2">
    <citation type="journal article" date="2003" name="Nucleic Acids Res.">
        <title>What's in the genome of a filamentous fungus? Analysis of the Neurospora genome sequence.</title>
        <authorList>
            <person name="Mannhaupt G."/>
            <person name="Montrone C."/>
            <person name="Haase D."/>
            <person name="Mewes H.-W."/>
            <person name="Aign V."/>
            <person name="Hoheisel J.D."/>
            <person name="Fartmann B."/>
            <person name="Nyakatura G."/>
            <person name="Kempken F."/>
            <person name="Maier J."/>
            <person name="Schulte U."/>
        </authorList>
    </citation>
    <scope>NUCLEOTIDE SEQUENCE [LARGE SCALE GENOMIC DNA]</scope>
    <source>
        <strain>ATCC 24698 / 74-OR23-1A / CBS 708.71 / DSM 1257 / FGSC 987</strain>
    </source>
</reference>
<reference key="3">
    <citation type="journal article" date="2003" name="Nature">
        <title>The genome sequence of the filamentous fungus Neurospora crassa.</title>
        <authorList>
            <person name="Galagan J.E."/>
            <person name="Calvo S.E."/>
            <person name="Borkovich K.A."/>
            <person name="Selker E.U."/>
            <person name="Read N.D."/>
            <person name="Jaffe D.B."/>
            <person name="FitzHugh W."/>
            <person name="Ma L.-J."/>
            <person name="Smirnov S."/>
            <person name="Purcell S."/>
            <person name="Rehman B."/>
            <person name="Elkins T."/>
            <person name="Engels R."/>
            <person name="Wang S."/>
            <person name="Nielsen C.B."/>
            <person name="Butler J."/>
            <person name="Endrizzi M."/>
            <person name="Qui D."/>
            <person name="Ianakiev P."/>
            <person name="Bell-Pedersen D."/>
            <person name="Nelson M.A."/>
            <person name="Werner-Washburne M."/>
            <person name="Selitrennikoff C.P."/>
            <person name="Kinsey J.A."/>
            <person name="Braun E.L."/>
            <person name="Zelter A."/>
            <person name="Schulte U."/>
            <person name="Kothe G.O."/>
            <person name="Jedd G."/>
            <person name="Mewes H.-W."/>
            <person name="Staben C."/>
            <person name="Marcotte E."/>
            <person name="Greenberg D."/>
            <person name="Roy A."/>
            <person name="Foley K."/>
            <person name="Naylor J."/>
            <person name="Stange-Thomann N."/>
            <person name="Barrett R."/>
            <person name="Gnerre S."/>
            <person name="Kamal M."/>
            <person name="Kamvysselis M."/>
            <person name="Mauceli E.W."/>
            <person name="Bielke C."/>
            <person name="Rudd S."/>
            <person name="Frishman D."/>
            <person name="Krystofova S."/>
            <person name="Rasmussen C."/>
            <person name="Metzenberg R.L."/>
            <person name="Perkins D.D."/>
            <person name="Kroken S."/>
            <person name="Cogoni C."/>
            <person name="Macino G."/>
            <person name="Catcheside D.E.A."/>
            <person name="Li W."/>
            <person name="Pratt R.J."/>
            <person name="Osmani S.A."/>
            <person name="DeSouza C.P.C."/>
            <person name="Glass N.L."/>
            <person name="Orbach M.J."/>
            <person name="Berglund J.A."/>
            <person name="Voelker R."/>
            <person name="Yarden O."/>
            <person name="Plamann M."/>
            <person name="Seiler S."/>
            <person name="Dunlap J.C."/>
            <person name="Radford A."/>
            <person name="Aramayo R."/>
            <person name="Natvig D.O."/>
            <person name="Alex L.A."/>
            <person name="Mannhaupt G."/>
            <person name="Ebbole D.J."/>
            <person name="Freitag M."/>
            <person name="Paulsen I."/>
            <person name="Sachs M.S."/>
            <person name="Lander E.S."/>
            <person name="Nusbaum C."/>
            <person name="Birren B.W."/>
        </authorList>
    </citation>
    <scope>NUCLEOTIDE SEQUENCE [LARGE SCALE GENOMIC DNA]</scope>
    <source>
        <strain>ATCC 24698 / 74-OR23-1A / CBS 708.71 / DSM 1257 / FGSC 987</strain>
    </source>
</reference>
<proteinExistence type="inferred from homology"/>
<name>KAPR_NEUCR</name>